<name>LPXA_ECO57</name>
<feature type="chain" id="PRO_0000188048" description="Acyl-[acyl-carrier-protein]--UDP-N-acetylglucosamine O-acyltransferase">
    <location>
        <begin position="1"/>
        <end position="262"/>
    </location>
</feature>
<reference key="1">
    <citation type="journal article" date="2001" name="Nature">
        <title>Genome sequence of enterohaemorrhagic Escherichia coli O157:H7.</title>
        <authorList>
            <person name="Perna N.T."/>
            <person name="Plunkett G. III"/>
            <person name="Burland V."/>
            <person name="Mau B."/>
            <person name="Glasner J.D."/>
            <person name="Rose D.J."/>
            <person name="Mayhew G.F."/>
            <person name="Evans P.S."/>
            <person name="Gregor J."/>
            <person name="Kirkpatrick H.A."/>
            <person name="Posfai G."/>
            <person name="Hackett J."/>
            <person name="Klink S."/>
            <person name="Boutin A."/>
            <person name="Shao Y."/>
            <person name="Miller L."/>
            <person name="Grotbeck E.J."/>
            <person name="Davis N.W."/>
            <person name="Lim A."/>
            <person name="Dimalanta E.T."/>
            <person name="Potamousis K."/>
            <person name="Apodaca J."/>
            <person name="Anantharaman T.S."/>
            <person name="Lin J."/>
            <person name="Yen G."/>
            <person name="Schwartz D.C."/>
            <person name="Welch R.A."/>
            <person name="Blattner F.R."/>
        </authorList>
    </citation>
    <scope>NUCLEOTIDE SEQUENCE [LARGE SCALE GENOMIC DNA]</scope>
    <source>
        <strain>O157:H7 / EDL933 / ATCC 700927 / EHEC</strain>
    </source>
</reference>
<reference key="2">
    <citation type="journal article" date="2001" name="DNA Res.">
        <title>Complete genome sequence of enterohemorrhagic Escherichia coli O157:H7 and genomic comparison with a laboratory strain K-12.</title>
        <authorList>
            <person name="Hayashi T."/>
            <person name="Makino K."/>
            <person name="Ohnishi M."/>
            <person name="Kurokawa K."/>
            <person name="Ishii K."/>
            <person name="Yokoyama K."/>
            <person name="Han C.-G."/>
            <person name="Ohtsubo E."/>
            <person name="Nakayama K."/>
            <person name="Murata T."/>
            <person name="Tanaka M."/>
            <person name="Tobe T."/>
            <person name="Iida T."/>
            <person name="Takami H."/>
            <person name="Honda T."/>
            <person name="Sasakawa C."/>
            <person name="Ogasawara N."/>
            <person name="Yasunaga T."/>
            <person name="Kuhara S."/>
            <person name="Shiba T."/>
            <person name="Hattori M."/>
            <person name="Shinagawa H."/>
        </authorList>
    </citation>
    <scope>NUCLEOTIDE SEQUENCE [LARGE SCALE GENOMIC DNA]</scope>
    <source>
        <strain>O157:H7 / Sakai / RIMD 0509952 / EHEC</strain>
    </source>
</reference>
<organism>
    <name type="scientific">Escherichia coli O157:H7</name>
    <dbReference type="NCBI Taxonomy" id="83334"/>
    <lineage>
        <taxon>Bacteria</taxon>
        <taxon>Pseudomonadati</taxon>
        <taxon>Pseudomonadota</taxon>
        <taxon>Gammaproteobacteria</taxon>
        <taxon>Enterobacterales</taxon>
        <taxon>Enterobacteriaceae</taxon>
        <taxon>Escherichia</taxon>
    </lineage>
</organism>
<keyword id="KW-0012">Acyltransferase</keyword>
<keyword id="KW-0963">Cytoplasm</keyword>
<keyword id="KW-0441">Lipid A biosynthesis</keyword>
<keyword id="KW-0444">Lipid biosynthesis</keyword>
<keyword id="KW-0443">Lipid metabolism</keyword>
<keyword id="KW-1185">Reference proteome</keyword>
<keyword id="KW-0677">Repeat</keyword>
<keyword id="KW-0808">Transferase</keyword>
<protein>
    <recommendedName>
        <fullName evidence="1">Acyl-[acyl-carrier-protein]--UDP-N-acetylglucosamine O-acyltransferase</fullName>
        <shortName evidence="1">UDP-N-acetylglucosamine acyltransferase</shortName>
        <ecNumber evidence="1">2.3.1.129</ecNumber>
    </recommendedName>
</protein>
<accession>Q8X8X8</accession>
<comment type="function">
    <text evidence="1">Involved in the biosynthesis of lipid A, a phosphorylated glycolipid that anchors the lipopolysaccharide to the outer membrane of the cell.</text>
</comment>
<comment type="catalytic activity">
    <reaction evidence="1">
        <text>a (3R)-hydroxyacyl-[ACP] + UDP-N-acetyl-alpha-D-glucosamine = a UDP-3-O-[(3R)-3-hydroxyacyl]-N-acetyl-alpha-D-glucosamine + holo-[ACP]</text>
        <dbReference type="Rhea" id="RHEA:67812"/>
        <dbReference type="Rhea" id="RHEA-COMP:9685"/>
        <dbReference type="Rhea" id="RHEA-COMP:9945"/>
        <dbReference type="ChEBI" id="CHEBI:57705"/>
        <dbReference type="ChEBI" id="CHEBI:64479"/>
        <dbReference type="ChEBI" id="CHEBI:78827"/>
        <dbReference type="ChEBI" id="CHEBI:173225"/>
        <dbReference type="EC" id="2.3.1.129"/>
    </reaction>
</comment>
<comment type="pathway">
    <text evidence="1">Glycolipid biosynthesis; lipid IV(A) biosynthesis; lipid IV(A) from (3R)-3-hydroxytetradecanoyl-[acyl-carrier-protein] and UDP-N-acetyl-alpha-D-glucosamine: step 1/6.</text>
</comment>
<comment type="subunit">
    <text evidence="1">Homotrimer.</text>
</comment>
<comment type="subcellular location">
    <subcellularLocation>
        <location evidence="1">Cytoplasm</location>
    </subcellularLocation>
</comment>
<comment type="similarity">
    <text evidence="1">Belongs to the transferase hexapeptide repeat family. LpxA subfamily.</text>
</comment>
<dbReference type="EC" id="2.3.1.129" evidence="1"/>
<dbReference type="EMBL" id="AE005174">
    <property type="protein sequence ID" value="AAG54483.1"/>
    <property type="molecule type" value="Genomic_DNA"/>
</dbReference>
<dbReference type="EMBL" id="BA000007">
    <property type="protein sequence ID" value="BAB33606.1"/>
    <property type="molecule type" value="Genomic_DNA"/>
</dbReference>
<dbReference type="PIR" id="G85502">
    <property type="entry name" value="G85502"/>
</dbReference>
<dbReference type="PIR" id="G90651">
    <property type="entry name" value="G90651"/>
</dbReference>
<dbReference type="RefSeq" id="NP_308210.1">
    <property type="nucleotide sequence ID" value="NC_002695.1"/>
</dbReference>
<dbReference type="RefSeq" id="WP_000565963.1">
    <property type="nucleotide sequence ID" value="NZ_VOAI01000002.1"/>
</dbReference>
<dbReference type="SMR" id="Q8X8X8"/>
<dbReference type="STRING" id="155864.Z0193"/>
<dbReference type="GeneID" id="913893"/>
<dbReference type="KEGG" id="ece:Z0193"/>
<dbReference type="KEGG" id="ecs:ECs_0183"/>
<dbReference type="PATRIC" id="fig|386585.9.peg.286"/>
<dbReference type="eggNOG" id="COG1043">
    <property type="taxonomic scope" value="Bacteria"/>
</dbReference>
<dbReference type="HOGENOM" id="CLU_061249_0_0_6"/>
<dbReference type="OMA" id="ECVTINR"/>
<dbReference type="UniPathway" id="UPA00359">
    <property type="reaction ID" value="UER00477"/>
</dbReference>
<dbReference type="Proteomes" id="UP000000558">
    <property type="component" value="Chromosome"/>
</dbReference>
<dbReference type="Proteomes" id="UP000002519">
    <property type="component" value="Chromosome"/>
</dbReference>
<dbReference type="GO" id="GO:0005737">
    <property type="term" value="C:cytoplasm"/>
    <property type="evidence" value="ECO:0007669"/>
    <property type="project" value="UniProtKB-SubCell"/>
</dbReference>
<dbReference type="GO" id="GO:0016020">
    <property type="term" value="C:membrane"/>
    <property type="evidence" value="ECO:0007669"/>
    <property type="project" value="GOC"/>
</dbReference>
<dbReference type="GO" id="GO:0008780">
    <property type="term" value="F:acyl-[acyl-carrier-protein]-UDP-N-acetylglucosamine O-acyltransferase activity"/>
    <property type="evidence" value="ECO:0007669"/>
    <property type="project" value="UniProtKB-UniRule"/>
</dbReference>
<dbReference type="GO" id="GO:0009245">
    <property type="term" value="P:lipid A biosynthetic process"/>
    <property type="evidence" value="ECO:0007669"/>
    <property type="project" value="UniProtKB-UniRule"/>
</dbReference>
<dbReference type="CDD" id="cd03351">
    <property type="entry name" value="LbH_UDP-GlcNAc_AT"/>
    <property type="match status" value="1"/>
</dbReference>
<dbReference type="FunFam" id="1.20.1180.10:FF:000001">
    <property type="entry name" value="Acyl-[acyl-carrier-protein]--UDP-N-acetylglucosamine O-acyltransferase"/>
    <property type="match status" value="1"/>
</dbReference>
<dbReference type="FunFam" id="2.160.10.10:FF:000003">
    <property type="entry name" value="Acyl-[acyl-carrier-protein]--UDP-N-acetylglucosamine O-acyltransferase"/>
    <property type="match status" value="1"/>
</dbReference>
<dbReference type="Gene3D" id="2.160.10.10">
    <property type="entry name" value="Hexapeptide repeat proteins"/>
    <property type="match status" value="1"/>
</dbReference>
<dbReference type="Gene3D" id="1.20.1180.10">
    <property type="entry name" value="Udp N-acetylglucosamine O-acyltransferase, C-terminal domain"/>
    <property type="match status" value="1"/>
</dbReference>
<dbReference type="HAMAP" id="MF_00387">
    <property type="entry name" value="LpxA"/>
    <property type="match status" value="1"/>
</dbReference>
<dbReference type="InterPro" id="IPR029098">
    <property type="entry name" value="Acetyltransf_C"/>
</dbReference>
<dbReference type="InterPro" id="IPR037157">
    <property type="entry name" value="Acetyltransf_C_sf"/>
</dbReference>
<dbReference type="InterPro" id="IPR001451">
    <property type="entry name" value="Hexapep"/>
</dbReference>
<dbReference type="InterPro" id="IPR018357">
    <property type="entry name" value="Hexapep_transf_CS"/>
</dbReference>
<dbReference type="InterPro" id="IPR010137">
    <property type="entry name" value="Lipid_A_LpxA"/>
</dbReference>
<dbReference type="InterPro" id="IPR011004">
    <property type="entry name" value="Trimer_LpxA-like_sf"/>
</dbReference>
<dbReference type="NCBIfam" id="TIGR01852">
    <property type="entry name" value="lipid_A_lpxA"/>
    <property type="match status" value="1"/>
</dbReference>
<dbReference type="NCBIfam" id="NF003657">
    <property type="entry name" value="PRK05289.1"/>
    <property type="match status" value="1"/>
</dbReference>
<dbReference type="PANTHER" id="PTHR43480">
    <property type="entry name" value="ACYL-[ACYL-CARRIER-PROTEIN]--UDP-N-ACETYLGLUCOSAMINE O-ACYLTRANSFERASE"/>
    <property type="match status" value="1"/>
</dbReference>
<dbReference type="PANTHER" id="PTHR43480:SF1">
    <property type="entry name" value="ACYL-[ACYL-CARRIER-PROTEIN]--UDP-N-ACETYLGLUCOSAMINE O-ACYLTRANSFERASE, MITOCHONDRIAL-RELATED"/>
    <property type="match status" value="1"/>
</dbReference>
<dbReference type="Pfam" id="PF13720">
    <property type="entry name" value="Acetyltransf_11"/>
    <property type="match status" value="1"/>
</dbReference>
<dbReference type="Pfam" id="PF00132">
    <property type="entry name" value="Hexapep"/>
    <property type="match status" value="2"/>
</dbReference>
<dbReference type="PIRSF" id="PIRSF000456">
    <property type="entry name" value="UDP-GlcNAc_acltr"/>
    <property type="match status" value="1"/>
</dbReference>
<dbReference type="SUPFAM" id="SSF51161">
    <property type="entry name" value="Trimeric LpxA-like enzymes"/>
    <property type="match status" value="1"/>
</dbReference>
<dbReference type="PROSITE" id="PS00101">
    <property type="entry name" value="HEXAPEP_TRANSFERASES"/>
    <property type="match status" value="2"/>
</dbReference>
<gene>
    <name evidence="1" type="primary">lpxA</name>
    <name type="ordered locus">Z0193</name>
    <name type="ordered locus">ECs0183</name>
</gene>
<proteinExistence type="inferred from homology"/>
<sequence>MIDKSAFVHPTAIVEEGASIGANAHIGPFCIVGPHVEIGEGTVLKSHVVVNGHTKIGRDNEIYQFASIGEVNQDLKYAGEPTRVEIGDRNRIRESVTIHRGTVQGGGLTKVGSDNLLMINAHIAHDCTVGNRCILANNATLAGHVSVDDFAIIGGMAAVHQFCIIGAHVMVGGCSGVAQDVPPYVIAQGNHATPFGVNIEGLKRRGFSREAITAIRNAYKLIYRSGKTLDEVKPEIAELAETYPEVKAFTDFFARSTRGLIR</sequence>
<evidence type="ECO:0000255" key="1">
    <source>
        <dbReference type="HAMAP-Rule" id="MF_00387"/>
    </source>
</evidence>